<protein>
    <recommendedName>
        <fullName evidence="1">Large ribosomal subunit protein uL22</fullName>
    </recommendedName>
    <alternativeName>
        <fullName evidence="2">50S ribosomal protein L22</fullName>
    </alternativeName>
</protein>
<reference key="1">
    <citation type="journal article" date="2005" name="Nat. Genet.">
        <title>The complete genome sequence of Francisella tularensis, the causative agent of tularemia.</title>
        <authorList>
            <person name="Larsson P."/>
            <person name="Oyston P.C.F."/>
            <person name="Chain P."/>
            <person name="Chu M.C."/>
            <person name="Duffield M."/>
            <person name="Fuxelius H.-H."/>
            <person name="Garcia E."/>
            <person name="Haelltorp G."/>
            <person name="Johansson D."/>
            <person name="Isherwood K.E."/>
            <person name="Karp P.D."/>
            <person name="Larsson E."/>
            <person name="Liu Y."/>
            <person name="Michell S."/>
            <person name="Prior J."/>
            <person name="Prior R."/>
            <person name="Malfatti S."/>
            <person name="Sjoestedt A."/>
            <person name="Svensson K."/>
            <person name="Thompson N."/>
            <person name="Vergez L."/>
            <person name="Wagg J.K."/>
            <person name="Wren B.W."/>
            <person name="Lindler L.E."/>
            <person name="Andersson S.G.E."/>
            <person name="Forsman M."/>
            <person name="Titball R.W."/>
        </authorList>
    </citation>
    <scope>NUCLEOTIDE SEQUENCE [LARGE SCALE GENOMIC DNA]</scope>
    <source>
        <strain>SCHU S4 / Schu 4</strain>
    </source>
</reference>
<proteinExistence type="inferred from homology"/>
<keyword id="KW-1185">Reference proteome</keyword>
<keyword id="KW-0687">Ribonucleoprotein</keyword>
<keyword id="KW-0689">Ribosomal protein</keyword>
<keyword id="KW-0694">RNA-binding</keyword>
<keyword id="KW-0699">rRNA-binding</keyword>
<comment type="function">
    <text evidence="1">This protein binds specifically to 23S rRNA; its binding is stimulated by other ribosomal proteins, e.g. L4, L17, and L20. It is important during the early stages of 50S assembly. It makes multiple contacts with different domains of the 23S rRNA in the assembled 50S subunit and ribosome (By similarity).</text>
</comment>
<comment type="function">
    <text evidence="1">The globular domain of the protein is located near the polypeptide exit tunnel on the outside of the subunit, while an extended beta-hairpin is found that lines the wall of the exit tunnel in the center of the 70S ribosome.</text>
</comment>
<comment type="subunit">
    <text evidence="1">Part of the 50S ribosomal subunit.</text>
</comment>
<comment type="similarity">
    <text evidence="1">Belongs to the universal ribosomal protein uL22 family.</text>
</comment>
<organism>
    <name type="scientific">Francisella tularensis subsp. tularensis (strain SCHU S4 / Schu 4)</name>
    <dbReference type="NCBI Taxonomy" id="177416"/>
    <lineage>
        <taxon>Bacteria</taxon>
        <taxon>Pseudomonadati</taxon>
        <taxon>Pseudomonadota</taxon>
        <taxon>Gammaproteobacteria</taxon>
        <taxon>Thiotrichales</taxon>
        <taxon>Francisellaceae</taxon>
        <taxon>Francisella</taxon>
    </lineage>
</organism>
<accession>Q5NHW3</accession>
<sequence length="111" mass="12201">MEVQAKLKFARISAQKCRLVADQIRGLPVEQAINLLTFSNKKAAVLIKGVLNSAVANAEHNDGMDVDSLVVSTIFVDEGPTMKRFEARAKGRGNRILKRTSHITVKVAEKK</sequence>
<name>RL22_FRATT</name>
<feature type="chain" id="PRO_0000243150" description="Large ribosomal subunit protein uL22">
    <location>
        <begin position="1"/>
        <end position="111"/>
    </location>
</feature>
<dbReference type="EMBL" id="AJ749949">
    <property type="protein sequence ID" value="CAG44963.1"/>
    <property type="molecule type" value="Genomic_DNA"/>
</dbReference>
<dbReference type="RefSeq" id="WP_003027193.1">
    <property type="nucleotide sequence ID" value="NZ_CP010290.1"/>
</dbReference>
<dbReference type="RefSeq" id="YP_169379.1">
    <property type="nucleotide sequence ID" value="NC_006570.2"/>
</dbReference>
<dbReference type="SMR" id="Q5NHW3"/>
<dbReference type="STRING" id="177416.FTT_0330"/>
<dbReference type="DNASU" id="3192000"/>
<dbReference type="EnsemblBacteria" id="CAG44963">
    <property type="protein sequence ID" value="CAG44963"/>
    <property type="gene ID" value="FTT_0330"/>
</dbReference>
<dbReference type="GeneID" id="75264256"/>
<dbReference type="KEGG" id="ftu:FTT_0330"/>
<dbReference type="eggNOG" id="COG0091">
    <property type="taxonomic scope" value="Bacteria"/>
</dbReference>
<dbReference type="OrthoDB" id="9805969at2"/>
<dbReference type="Proteomes" id="UP000001174">
    <property type="component" value="Chromosome"/>
</dbReference>
<dbReference type="GO" id="GO:0022625">
    <property type="term" value="C:cytosolic large ribosomal subunit"/>
    <property type="evidence" value="ECO:0007669"/>
    <property type="project" value="TreeGrafter"/>
</dbReference>
<dbReference type="GO" id="GO:0019843">
    <property type="term" value="F:rRNA binding"/>
    <property type="evidence" value="ECO:0007669"/>
    <property type="project" value="UniProtKB-UniRule"/>
</dbReference>
<dbReference type="GO" id="GO:0003735">
    <property type="term" value="F:structural constituent of ribosome"/>
    <property type="evidence" value="ECO:0007669"/>
    <property type="project" value="InterPro"/>
</dbReference>
<dbReference type="GO" id="GO:0006412">
    <property type="term" value="P:translation"/>
    <property type="evidence" value="ECO:0007669"/>
    <property type="project" value="UniProtKB-UniRule"/>
</dbReference>
<dbReference type="CDD" id="cd00336">
    <property type="entry name" value="Ribosomal_L22"/>
    <property type="match status" value="1"/>
</dbReference>
<dbReference type="FunFam" id="3.90.470.10:FF:000001">
    <property type="entry name" value="50S ribosomal protein L22"/>
    <property type="match status" value="1"/>
</dbReference>
<dbReference type="Gene3D" id="3.90.470.10">
    <property type="entry name" value="Ribosomal protein L22/L17"/>
    <property type="match status" value="1"/>
</dbReference>
<dbReference type="HAMAP" id="MF_01331_B">
    <property type="entry name" value="Ribosomal_uL22_B"/>
    <property type="match status" value="1"/>
</dbReference>
<dbReference type="InterPro" id="IPR001063">
    <property type="entry name" value="Ribosomal_uL22"/>
</dbReference>
<dbReference type="InterPro" id="IPR005727">
    <property type="entry name" value="Ribosomal_uL22_bac/chlpt-type"/>
</dbReference>
<dbReference type="InterPro" id="IPR047867">
    <property type="entry name" value="Ribosomal_uL22_bac/org-type"/>
</dbReference>
<dbReference type="InterPro" id="IPR018260">
    <property type="entry name" value="Ribosomal_uL22_CS"/>
</dbReference>
<dbReference type="InterPro" id="IPR036394">
    <property type="entry name" value="Ribosomal_uL22_sf"/>
</dbReference>
<dbReference type="NCBIfam" id="TIGR01044">
    <property type="entry name" value="rplV_bact"/>
    <property type="match status" value="1"/>
</dbReference>
<dbReference type="PANTHER" id="PTHR13501">
    <property type="entry name" value="CHLOROPLAST 50S RIBOSOMAL PROTEIN L22-RELATED"/>
    <property type="match status" value="1"/>
</dbReference>
<dbReference type="PANTHER" id="PTHR13501:SF8">
    <property type="entry name" value="LARGE RIBOSOMAL SUBUNIT PROTEIN UL22M"/>
    <property type="match status" value="1"/>
</dbReference>
<dbReference type="Pfam" id="PF00237">
    <property type="entry name" value="Ribosomal_L22"/>
    <property type="match status" value="1"/>
</dbReference>
<dbReference type="SUPFAM" id="SSF54843">
    <property type="entry name" value="Ribosomal protein L22"/>
    <property type="match status" value="1"/>
</dbReference>
<dbReference type="PROSITE" id="PS00464">
    <property type="entry name" value="RIBOSOMAL_L22"/>
    <property type="match status" value="1"/>
</dbReference>
<evidence type="ECO:0000255" key="1">
    <source>
        <dbReference type="HAMAP-Rule" id="MF_01331"/>
    </source>
</evidence>
<evidence type="ECO:0000305" key="2"/>
<gene>
    <name evidence="1" type="primary">rplV</name>
    <name type="ordered locus">FTT_0330</name>
</gene>